<evidence type="ECO:0000255" key="1">
    <source>
        <dbReference type="HAMAP-Rule" id="MF_00017"/>
    </source>
</evidence>
<dbReference type="EMBL" id="CP000576">
    <property type="protein sequence ID" value="ABO17827.1"/>
    <property type="molecule type" value="Genomic_DNA"/>
</dbReference>
<dbReference type="RefSeq" id="WP_011863155.1">
    <property type="nucleotide sequence ID" value="NC_009091.1"/>
</dbReference>
<dbReference type="SMR" id="A3PDK2"/>
<dbReference type="STRING" id="167546.P9301_12041"/>
<dbReference type="KEGG" id="pmg:P9301_12041"/>
<dbReference type="eggNOG" id="COG0353">
    <property type="taxonomic scope" value="Bacteria"/>
</dbReference>
<dbReference type="HOGENOM" id="CLU_060739_1_0_3"/>
<dbReference type="OrthoDB" id="9802672at2"/>
<dbReference type="Proteomes" id="UP000001430">
    <property type="component" value="Chromosome"/>
</dbReference>
<dbReference type="GO" id="GO:0003677">
    <property type="term" value="F:DNA binding"/>
    <property type="evidence" value="ECO:0007669"/>
    <property type="project" value="UniProtKB-UniRule"/>
</dbReference>
<dbReference type="GO" id="GO:0008270">
    <property type="term" value="F:zinc ion binding"/>
    <property type="evidence" value="ECO:0007669"/>
    <property type="project" value="UniProtKB-KW"/>
</dbReference>
<dbReference type="GO" id="GO:0006310">
    <property type="term" value="P:DNA recombination"/>
    <property type="evidence" value="ECO:0007669"/>
    <property type="project" value="UniProtKB-UniRule"/>
</dbReference>
<dbReference type="GO" id="GO:0006281">
    <property type="term" value="P:DNA repair"/>
    <property type="evidence" value="ECO:0007669"/>
    <property type="project" value="UniProtKB-UniRule"/>
</dbReference>
<dbReference type="CDD" id="cd01025">
    <property type="entry name" value="TOPRIM_recR"/>
    <property type="match status" value="1"/>
</dbReference>
<dbReference type="Gene3D" id="3.30.60.80">
    <property type="match status" value="1"/>
</dbReference>
<dbReference type="Gene3D" id="3.40.1360.10">
    <property type="match status" value="1"/>
</dbReference>
<dbReference type="Gene3D" id="6.10.250.240">
    <property type="match status" value="1"/>
</dbReference>
<dbReference type="Gene3D" id="1.10.8.420">
    <property type="entry name" value="RecR Domain 1"/>
    <property type="match status" value="1"/>
</dbReference>
<dbReference type="HAMAP" id="MF_00017">
    <property type="entry name" value="RecR"/>
    <property type="match status" value="1"/>
</dbReference>
<dbReference type="InterPro" id="IPR000093">
    <property type="entry name" value="DNA_Rcmb_RecR"/>
</dbReference>
<dbReference type="InterPro" id="IPR023627">
    <property type="entry name" value="Rcmb_RecR"/>
</dbReference>
<dbReference type="InterPro" id="IPR015967">
    <property type="entry name" value="Rcmb_RecR_Znf"/>
</dbReference>
<dbReference type="InterPro" id="IPR006171">
    <property type="entry name" value="TOPRIM_dom"/>
</dbReference>
<dbReference type="InterPro" id="IPR034137">
    <property type="entry name" value="TOPRIM_RecR"/>
</dbReference>
<dbReference type="NCBIfam" id="TIGR00615">
    <property type="entry name" value="recR"/>
    <property type="match status" value="1"/>
</dbReference>
<dbReference type="PANTHER" id="PTHR30446">
    <property type="entry name" value="RECOMBINATION PROTEIN RECR"/>
    <property type="match status" value="1"/>
</dbReference>
<dbReference type="PANTHER" id="PTHR30446:SF0">
    <property type="entry name" value="RECOMBINATION PROTEIN RECR"/>
    <property type="match status" value="1"/>
</dbReference>
<dbReference type="Pfam" id="PF21175">
    <property type="entry name" value="RecR_C"/>
    <property type="match status" value="1"/>
</dbReference>
<dbReference type="Pfam" id="PF21176">
    <property type="entry name" value="RecR_HhH"/>
    <property type="match status" value="1"/>
</dbReference>
<dbReference type="Pfam" id="PF02132">
    <property type="entry name" value="RecR_ZnF"/>
    <property type="match status" value="1"/>
</dbReference>
<dbReference type="Pfam" id="PF13662">
    <property type="entry name" value="Toprim_4"/>
    <property type="match status" value="1"/>
</dbReference>
<dbReference type="SMART" id="SM00493">
    <property type="entry name" value="TOPRIM"/>
    <property type="match status" value="1"/>
</dbReference>
<dbReference type="SUPFAM" id="SSF111304">
    <property type="entry name" value="Recombination protein RecR"/>
    <property type="match status" value="1"/>
</dbReference>
<dbReference type="PROSITE" id="PS01300">
    <property type="entry name" value="RECR"/>
    <property type="match status" value="1"/>
</dbReference>
<dbReference type="PROSITE" id="PS50880">
    <property type="entry name" value="TOPRIM"/>
    <property type="match status" value="1"/>
</dbReference>
<name>RECR_PROM0</name>
<reference key="1">
    <citation type="journal article" date="2007" name="PLoS Genet.">
        <title>Patterns and implications of gene gain and loss in the evolution of Prochlorococcus.</title>
        <authorList>
            <person name="Kettler G.C."/>
            <person name="Martiny A.C."/>
            <person name="Huang K."/>
            <person name="Zucker J."/>
            <person name="Coleman M.L."/>
            <person name="Rodrigue S."/>
            <person name="Chen F."/>
            <person name="Lapidus A."/>
            <person name="Ferriera S."/>
            <person name="Johnson J."/>
            <person name="Steglich C."/>
            <person name="Church G.M."/>
            <person name="Richardson P."/>
            <person name="Chisholm S.W."/>
        </authorList>
    </citation>
    <scope>NUCLEOTIDE SEQUENCE [LARGE SCALE GENOMIC DNA]</scope>
    <source>
        <strain>MIT 9301</strain>
    </source>
</reference>
<organism>
    <name type="scientific">Prochlorococcus marinus (strain MIT 9301)</name>
    <dbReference type="NCBI Taxonomy" id="167546"/>
    <lineage>
        <taxon>Bacteria</taxon>
        <taxon>Bacillati</taxon>
        <taxon>Cyanobacteriota</taxon>
        <taxon>Cyanophyceae</taxon>
        <taxon>Synechococcales</taxon>
        <taxon>Prochlorococcaceae</taxon>
        <taxon>Prochlorococcus</taxon>
    </lineage>
</organism>
<protein>
    <recommendedName>
        <fullName evidence="1">Recombination protein RecR</fullName>
    </recommendedName>
</protein>
<comment type="function">
    <text evidence="1">May play a role in DNA repair. It seems to be involved in an RecBC-independent recombinational process of DNA repair. It may act with RecF and RecO.</text>
</comment>
<comment type="similarity">
    <text evidence="1">Belongs to the RecR family.</text>
</comment>
<proteinExistence type="inferred from homology"/>
<feature type="chain" id="PRO_1000001576" description="Recombination protein RecR">
    <location>
        <begin position="1"/>
        <end position="199"/>
    </location>
</feature>
<feature type="domain" description="Toprim" evidence="1">
    <location>
        <begin position="81"/>
        <end position="175"/>
    </location>
</feature>
<feature type="zinc finger region" description="C4-type" evidence="1">
    <location>
        <begin position="58"/>
        <end position="73"/>
    </location>
</feature>
<sequence length="199" mass="22212">MITYTKPLSKLIGHFEKFPGIGPRTAQRLALFILKQPESTIREFSKALLEAHSNVGRCKKCFNLTSEDECEICRNTERNQKLICVVAETKDLLALERAREFKGVYHVIGGLISPMDSVGPELLEIRSLVERVSKSEIDEIILALTPSVEGDTTSLYIGKLLAPFTKVTRIAYGLPMGSELEYVDEVTLARALEGRTKLN</sequence>
<keyword id="KW-0227">DNA damage</keyword>
<keyword id="KW-0233">DNA recombination</keyword>
<keyword id="KW-0234">DNA repair</keyword>
<keyword id="KW-0479">Metal-binding</keyword>
<keyword id="KW-1185">Reference proteome</keyword>
<keyword id="KW-0862">Zinc</keyword>
<keyword id="KW-0863">Zinc-finger</keyword>
<accession>A3PDK2</accession>
<gene>
    <name evidence="1" type="primary">recR</name>
    <name type="ordered locus">P9301_12041</name>
</gene>